<feature type="chain" id="PRO_1000049217" description="Small ribosomal subunit protein bS16">
    <location>
        <begin position="1"/>
        <end position="149"/>
    </location>
</feature>
<feature type="region of interest" description="Disordered" evidence="2">
    <location>
        <begin position="115"/>
        <end position="149"/>
    </location>
</feature>
<feature type="compositionally biased region" description="Basic and acidic residues" evidence="2">
    <location>
        <begin position="119"/>
        <end position="131"/>
    </location>
</feature>
<feature type="compositionally biased region" description="Acidic residues" evidence="2">
    <location>
        <begin position="139"/>
        <end position="149"/>
    </location>
</feature>
<comment type="similarity">
    <text evidence="1">Belongs to the bacterial ribosomal protein bS16 family.</text>
</comment>
<evidence type="ECO:0000255" key="1">
    <source>
        <dbReference type="HAMAP-Rule" id="MF_00385"/>
    </source>
</evidence>
<evidence type="ECO:0000256" key="2">
    <source>
        <dbReference type="SAM" id="MobiDB-lite"/>
    </source>
</evidence>
<evidence type="ECO:0000305" key="3"/>
<organism>
    <name type="scientific">Bifidobacterium adolescentis (strain ATCC 15703 / DSM 20083 / NCTC 11814 / E194a)</name>
    <dbReference type="NCBI Taxonomy" id="367928"/>
    <lineage>
        <taxon>Bacteria</taxon>
        <taxon>Bacillati</taxon>
        <taxon>Actinomycetota</taxon>
        <taxon>Actinomycetes</taxon>
        <taxon>Bifidobacteriales</taxon>
        <taxon>Bifidobacteriaceae</taxon>
        <taxon>Bifidobacterium</taxon>
    </lineage>
</organism>
<dbReference type="EMBL" id="AP009256">
    <property type="protein sequence ID" value="BAF38990.1"/>
    <property type="molecule type" value="Genomic_DNA"/>
</dbReference>
<dbReference type="RefSeq" id="WP_011742735.1">
    <property type="nucleotide sequence ID" value="NZ_CAXVNC010000001.1"/>
</dbReference>
<dbReference type="SMR" id="A0ZZV7"/>
<dbReference type="STRING" id="367928.BAD_0209"/>
<dbReference type="PaxDb" id="1680-BADO_0217"/>
<dbReference type="GeneID" id="4557606"/>
<dbReference type="KEGG" id="bad:BAD_0209"/>
<dbReference type="HOGENOM" id="CLU_100590_1_0_11"/>
<dbReference type="Proteomes" id="UP000008702">
    <property type="component" value="Chromosome"/>
</dbReference>
<dbReference type="GO" id="GO:0005737">
    <property type="term" value="C:cytoplasm"/>
    <property type="evidence" value="ECO:0007669"/>
    <property type="project" value="UniProtKB-ARBA"/>
</dbReference>
<dbReference type="GO" id="GO:0015935">
    <property type="term" value="C:small ribosomal subunit"/>
    <property type="evidence" value="ECO:0007669"/>
    <property type="project" value="TreeGrafter"/>
</dbReference>
<dbReference type="GO" id="GO:0003735">
    <property type="term" value="F:structural constituent of ribosome"/>
    <property type="evidence" value="ECO:0007669"/>
    <property type="project" value="InterPro"/>
</dbReference>
<dbReference type="GO" id="GO:0006412">
    <property type="term" value="P:translation"/>
    <property type="evidence" value="ECO:0007669"/>
    <property type="project" value="UniProtKB-UniRule"/>
</dbReference>
<dbReference type="Gene3D" id="3.30.1320.10">
    <property type="match status" value="1"/>
</dbReference>
<dbReference type="HAMAP" id="MF_00385">
    <property type="entry name" value="Ribosomal_bS16"/>
    <property type="match status" value="1"/>
</dbReference>
<dbReference type="InterPro" id="IPR000307">
    <property type="entry name" value="Ribosomal_bS16"/>
</dbReference>
<dbReference type="InterPro" id="IPR020592">
    <property type="entry name" value="Ribosomal_bS16_CS"/>
</dbReference>
<dbReference type="InterPro" id="IPR023803">
    <property type="entry name" value="Ribosomal_bS16_dom_sf"/>
</dbReference>
<dbReference type="NCBIfam" id="NF011093">
    <property type="entry name" value="PRK14520.1"/>
    <property type="match status" value="1"/>
</dbReference>
<dbReference type="NCBIfam" id="TIGR00002">
    <property type="entry name" value="S16"/>
    <property type="match status" value="1"/>
</dbReference>
<dbReference type="PANTHER" id="PTHR12919">
    <property type="entry name" value="30S RIBOSOMAL PROTEIN S16"/>
    <property type="match status" value="1"/>
</dbReference>
<dbReference type="PANTHER" id="PTHR12919:SF20">
    <property type="entry name" value="SMALL RIBOSOMAL SUBUNIT PROTEIN BS16M"/>
    <property type="match status" value="1"/>
</dbReference>
<dbReference type="Pfam" id="PF00886">
    <property type="entry name" value="Ribosomal_S16"/>
    <property type="match status" value="1"/>
</dbReference>
<dbReference type="SUPFAM" id="SSF54565">
    <property type="entry name" value="Ribosomal protein S16"/>
    <property type="match status" value="1"/>
</dbReference>
<dbReference type="PROSITE" id="PS00732">
    <property type="entry name" value="RIBOSOMAL_S16"/>
    <property type="match status" value="1"/>
</dbReference>
<reference key="1">
    <citation type="submission" date="2006-12" db="EMBL/GenBank/DDBJ databases">
        <title>Bifidobacterium adolescentis complete genome sequence.</title>
        <authorList>
            <person name="Suzuki T."/>
            <person name="Tsuda Y."/>
            <person name="Kanou N."/>
            <person name="Inoue T."/>
            <person name="Kumazaki K."/>
            <person name="Nagano S."/>
            <person name="Hirai S."/>
            <person name="Tanaka K."/>
            <person name="Watanabe K."/>
        </authorList>
    </citation>
    <scope>NUCLEOTIDE SEQUENCE [LARGE SCALE GENOMIC DNA]</scope>
    <source>
        <strain>ATCC 15703 / DSM 20083 / NCTC 11814 / E194a</strain>
    </source>
</reference>
<gene>
    <name evidence="1" type="primary">rpsP</name>
    <name type="ordered locus">BAD_0209</name>
</gene>
<accession>A0ZZV7</accession>
<sequence length="149" mass="16169">MATKIRLKRMGKKFYAFYRVVIMDSRTKRDGRAIEEIGTYNPNTQPSTININSERAQYWLGVGAQPTEQVLNLLKITGDWQKFKGLDGAEGTLKTVEAGPDAAARVEAVEAQAQKLKAAKSEADAKAKAEAEAAATEEAPAEEPAAEAE</sequence>
<name>RS16_BIFAA</name>
<keyword id="KW-1185">Reference proteome</keyword>
<keyword id="KW-0687">Ribonucleoprotein</keyword>
<keyword id="KW-0689">Ribosomal protein</keyword>
<protein>
    <recommendedName>
        <fullName evidence="1">Small ribosomal subunit protein bS16</fullName>
    </recommendedName>
    <alternativeName>
        <fullName evidence="3">30S ribosomal protein S16</fullName>
    </alternativeName>
</protein>
<proteinExistence type="inferred from homology"/>